<reference key="1">
    <citation type="journal article" date="2003" name="Nature">
        <title>The genome sequence of Bacillus anthracis Ames and comparison to closely related bacteria.</title>
        <authorList>
            <person name="Read T.D."/>
            <person name="Peterson S.N."/>
            <person name="Tourasse N.J."/>
            <person name="Baillie L.W."/>
            <person name="Paulsen I.T."/>
            <person name="Nelson K.E."/>
            <person name="Tettelin H."/>
            <person name="Fouts D.E."/>
            <person name="Eisen J.A."/>
            <person name="Gill S.R."/>
            <person name="Holtzapple E.K."/>
            <person name="Okstad O.A."/>
            <person name="Helgason E."/>
            <person name="Rilstone J."/>
            <person name="Wu M."/>
            <person name="Kolonay J.F."/>
            <person name="Beanan M.J."/>
            <person name="Dodson R.J."/>
            <person name="Brinkac L.M."/>
            <person name="Gwinn M.L."/>
            <person name="DeBoy R.T."/>
            <person name="Madpu R."/>
            <person name="Daugherty S.C."/>
            <person name="Durkin A.S."/>
            <person name="Haft D.H."/>
            <person name="Nelson W.C."/>
            <person name="Peterson J.D."/>
            <person name="Pop M."/>
            <person name="Khouri H.M."/>
            <person name="Radune D."/>
            <person name="Benton J.L."/>
            <person name="Mahamoud Y."/>
            <person name="Jiang L."/>
            <person name="Hance I.R."/>
            <person name="Weidman J.F."/>
            <person name="Berry K.J."/>
            <person name="Plaut R.D."/>
            <person name="Wolf A.M."/>
            <person name="Watkins K.L."/>
            <person name="Nierman W.C."/>
            <person name="Hazen A."/>
            <person name="Cline R.T."/>
            <person name="Redmond C."/>
            <person name="Thwaite J.E."/>
            <person name="White O."/>
            <person name="Salzberg S.L."/>
            <person name="Thomason B."/>
            <person name="Friedlander A.M."/>
            <person name="Koehler T.M."/>
            <person name="Hanna P.C."/>
            <person name="Kolstoe A.-B."/>
            <person name="Fraser C.M."/>
        </authorList>
    </citation>
    <scope>NUCLEOTIDE SEQUENCE [LARGE SCALE GENOMIC DNA]</scope>
    <source>
        <strain>Ames / isolate Porton</strain>
    </source>
</reference>
<reference key="2">
    <citation type="journal article" date="2009" name="J. Bacteriol.">
        <title>The complete genome sequence of Bacillus anthracis Ames 'Ancestor'.</title>
        <authorList>
            <person name="Ravel J."/>
            <person name="Jiang L."/>
            <person name="Stanley S.T."/>
            <person name="Wilson M.R."/>
            <person name="Decker R.S."/>
            <person name="Read T.D."/>
            <person name="Worsham P."/>
            <person name="Keim P.S."/>
            <person name="Salzberg S.L."/>
            <person name="Fraser-Liggett C.M."/>
            <person name="Rasko D.A."/>
        </authorList>
    </citation>
    <scope>NUCLEOTIDE SEQUENCE [LARGE SCALE GENOMIC DNA]</scope>
    <source>
        <strain>Ames ancestor</strain>
    </source>
</reference>
<reference key="3">
    <citation type="submission" date="2004-01" db="EMBL/GenBank/DDBJ databases">
        <title>Complete genome sequence of Bacillus anthracis Sterne.</title>
        <authorList>
            <person name="Brettin T.S."/>
            <person name="Bruce D."/>
            <person name="Challacombe J.F."/>
            <person name="Gilna P."/>
            <person name="Han C."/>
            <person name="Hill K."/>
            <person name="Hitchcock P."/>
            <person name="Jackson P."/>
            <person name="Keim P."/>
            <person name="Longmire J."/>
            <person name="Lucas S."/>
            <person name="Okinaka R."/>
            <person name="Richardson P."/>
            <person name="Rubin E."/>
            <person name="Tice H."/>
        </authorList>
    </citation>
    <scope>NUCLEOTIDE SEQUENCE [LARGE SCALE GENOMIC DNA]</scope>
    <source>
        <strain>Sterne</strain>
    </source>
</reference>
<proteinExistence type="inferred from homology"/>
<comment type="similarity">
    <text evidence="1">Belongs to the UPF0180 family.</text>
</comment>
<protein>
    <recommendedName>
        <fullName evidence="1">UPF0180 protein BA_1413/GBAA_1413/BAS1304</fullName>
    </recommendedName>
</protein>
<feature type="chain" id="PRO_0000172735" description="UPF0180 protein BA_1413/GBAA_1413/BAS1304">
    <location>
        <begin position="1"/>
        <end position="82"/>
    </location>
</feature>
<accession>Q81T74</accession>
<accession>Q6I1F7</accession>
<accession>Q6KVA2</accession>
<sequence>MRIKARIGVENSLTDVQQALKQQGHEVVTLNSEQDAQGCDCCVVTGQDSNMMGIADASIKGSVITAHGLTTDDICQQVESRT</sequence>
<keyword id="KW-1185">Reference proteome</keyword>
<organism>
    <name type="scientific">Bacillus anthracis</name>
    <dbReference type="NCBI Taxonomy" id="1392"/>
    <lineage>
        <taxon>Bacteria</taxon>
        <taxon>Bacillati</taxon>
        <taxon>Bacillota</taxon>
        <taxon>Bacilli</taxon>
        <taxon>Bacillales</taxon>
        <taxon>Bacillaceae</taxon>
        <taxon>Bacillus</taxon>
        <taxon>Bacillus cereus group</taxon>
    </lineage>
</organism>
<evidence type="ECO:0000255" key="1">
    <source>
        <dbReference type="HAMAP-Rule" id="MF_00506"/>
    </source>
</evidence>
<name>Y1413_BACAN</name>
<dbReference type="EMBL" id="AE016879">
    <property type="protein sequence ID" value="AAP25356.1"/>
    <property type="molecule type" value="Genomic_DNA"/>
</dbReference>
<dbReference type="EMBL" id="AE017334">
    <property type="protein sequence ID" value="AAT30510.1"/>
    <property type="molecule type" value="Genomic_DNA"/>
</dbReference>
<dbReference type="EMBL" id="AE017225">
    <property type="protein sequence ID" value="AAT53624.1"/>
    <property type="molecule type" value="Genomic_DNA"/>
</dbReference>
<dbReference type="RefSeq" id="NP_843870.1">
    <property type="nucleotide sequence ID" value="NC_003997.3"/>
</dbReference>
<dbReference type="RefSeq" id="WP_001220365.1">
    <property type="nucleotide sequence ID" value="NZ_WXXJ01000017.1"/>
</dbReference>
<dbReference type="RefSeq" id="YP_027573.1">
    <property type="nucleotide sequence ID" value="NC_005945.1"/>
</dbReference>
<dbReference type="STRING" id="261594.GBAA_1413"/>
<dbReference type="DNASU" id="1087380"/>
<dbReference type="GeneID" id="45021392"/>
<dbReference type="KEGG" id="ban:BA_1413"/>
<dbReference type="KEGG" id="bar:GBAA_1413"/>
<dbReference type="KEGG" id="bat:BAS1304"/>
<dbReference type="PATRIC" id="fig|198094.11.peg.1386"/>
<dbReference type="eggNOG" id="ENOG503307C">
    <property type="taxonomic scope" value="Bacteria"/>
</dbReference>
<dbReference type="HOGENOM" id="CLU_187365_0_0_9"/>
<dbReference type="OMA" id="CCVITGQ"/>
<dbReference type="OrthoDB" id="1708042at2"/>
<dbReference type="Proteomes" id="UP000000427">
    <property type="component" value="Chromosome"/>
</dbReference>
<dbReference type="Proteomes" id="UP000000594">
    <property type="component" value="Chromosome"/>
</dbReference>
<dbReference type="HAMAP" id="MF_00506">
    <property type="entry name" value="UPF0180"/>
    <property type="match status" value="1"/>
</dbReference>
<dbReference type="InterPro" id="IPR005370">
    <property type="entry name" value="UPF0180"/>
</dbReference>
<dbReference type="NCBIfam" id="NF002845">
    <property type="entry name" value="PRK03094.1"/>
    <property type="match status" value="1"/>
</dbReference>
<dbReference type="Pfam" id="PF03698">
    <property type="entry name" value="UPF0180"/>
    <property type="match status" value="1"/>
</dbReference>
<gene>
    <name type="ordered locus">BA_1413</name>
    <name type="ordered locus">GBAA_1413</name>
    <name type="ordered locus">BAS1304</name>
</gene>